<evidence type="ECO:0000250" key="1"/>
<evidence type="ECO:0000255" key="2"/>
<evidence type="ECO:0000305" key="3"/>
<protein>
    <recommendedName>
        <fullName>Mitochondrial thiamine pyrophosphate carrier 1</fullName>
    </recommendedName>
</protein>
<dbReference type="EMBL" id="CH476665">
    <property type="protein sequence ID" value="EDN04627.1"/>
    <property type="molecule type" value="Genomic_DNA"/>
</dbReference>
<dbReference type="SMR" id="A6RF73"/>
<dbReference type="STRING" id="339724.A6RF73"/>
<dbReference type="KEGG" id="aje:HCAG_08289"/>
<dbReference type="VEuPathDB" id="FungiDB:HCAG_08289"/>
<dbReference type="HOGENOM" id="CLU_015166_10_3_1"/>
<dbReference type="OMA" id="MYVCYGA"/>
<dbReference type="OrthoDB" id="2541at299071"/>
<dbReference type="Proteomes" id="UP000009297">
    <property type="component" value="Unassembled WGS sequence"/>
</dbReference>
<dbReference type="GO" id="GO:0005743">
    <property type="term" value="C:mitochondrial inner membrane"/>
    <property type="evidence" value="ECO:0007669"/>
    <property type="project" value="UniProtKB-SubCell"/>
</dbReference>
<dbReference type="GO" id="GO:0055085">
    <property type="term" value="P:transmembrane transport"/>
    <property type="evidence" value="ECO:0007669"/>
    <property type="project" value="InterPro"/>
</dbReference>
<dbReference type="FunFam" id="1.50.40.10:FF:000011">
    <property type="entry name" value="Mitochondrial thiamine pyrophosphate carrier 1"/>
    <property type="match status" value="1"/>
</dbReference>
<dbReference type="Gene3D" id="1.50.40.10">
    <property type="entry name" value="Mitochondrial carrier domain"/>
    <property type="match status" value="1"/>
</dbReference>
<dbReference type="InterPro" id="IPR002067">
    <property type="entry name" value="Mit_carrier"/>
</dbReference>
<dbReference type="InterPro" id="IPR018108">
    <property type="entry name" value="Mitochondrial_sb/sol_carrier"/>
</dbReference>
<dbReference type="InterPro" id="IPR023395">
    <property type="entry name" value="Mt_carrier_dom_sf"/>
</dbReference>
<dbReference type="PANTHER" id="PTHR24089">
    <property type="entry name" value="SOLUTE CARRIER FAMILY 25"/>
    <property type="match status" value="1"/>
</dbReference>
<dbReference type="Pfam" id="PF00153">
    <property type="entry name" value="Mito_carr"/>
    <property type="match status" value="3"/>
</dbReference>
<dbReference type="PRINTS" id="PR00926">
    <property type="entry name" value="MITOCARRIER"/>
</dbReference>
<dbReference type="SUPFAM" id="SSF103506">
    <property type="entry name" value="Mitochondrial carrier"/>
    <property type="match status" value="1"/>
</dbReference>
<dbReference type="PROSITE" id="PS50920">
    <property type="entry name" value="SOLCAR"/>
    <property type="match status" value="3"/>
</dbReference>
<proteinExistence type="inferred from homology"/>
<gene>
    <name type="primary">TPC1</name>
    <name type="ORF">HCAG_08289</name>
</gene>
<reference key="1">
    <citation type="journal article" date="2009" name="Genome Res.">
        <title>Comparative genomic analyses of the human fungal pathogens Coccidioides and their relatives.</title>
        <authorList>
            <person name="Sharpton T.J."/>
            <person name="Stajich J.E."/>
            <person name="Rounsley S.D."/>
            <person name="Gardner M.J."/>
            <person name="Wortman J.R."/>
            <person name="Jordar V.S."/>
            <person name="Maiti R."/>
            <person name="Kodira C.D."/>
            <person name="Neafsey D.E."/>
            <person name="Zeng Q."/>
            <person name="Hung C.-Y."/>
            <person name="McMahan C."/>
            <person name="Muszewska A."/>
            <person name="Grynberg M."/>
            <person name="Mandel M.A."/>
            <person name="Kellner E.M."/>
            <person name="Barker B.M."/>
            <person name="Galgiani J.N."/>
            <person name="Orbach M.J."/>
            <person name="Kirkland T.N."/>
            <person name="Cole G.T."/>
            <person name="Henn M.R."/>
            <person name="Birren B.W."/>
            <person name="Taylor J.W."/>
        </authorList>
    </citation>
    <scope>NUCLEOTIDE SEQUENCE [LARGE SCALE GENOMIC DNA]</scope>
    <source>
        <strain>NAm1 / WU24</strain>
    </source>
</reference>
<feature type="chain" id="PRO_0000320453" description="Mitochondrial thiamine pyrophosphate carrier 1">
    <location>
        <begin position="1"/>
        <end position="324"/>
    </location>
</feature>
<feature type="transmembrane region" description="Helical; Name=1" evidence="2">
    <location>
        <begin position="15"/>
        <end position="35"/>
    </location>
</feature>
<feature type="transmembrane region" description="Helical; Name=2" evidence="2">
    <location>
        <begin position="79"/>
        <end position="99"/>
    </location>
</feature>
<feature type="transmembrane region" description="Helical; Name=3" evidence="2">
    <location>
        <begin position="125"/>
        <end position="145"/>
    </location>
</feature>
<feature type="transmembrane region" description="Helical; Name=4" evidence="2">
    <location>
        <begin position="182"/>
        <end position="202"/>
    </location>
</feature>
<feature type="transmembrane region" description="Helical; Name=5" evidence="2">
    <location>
        <begin position="218"/>
        <end position="238"/>
    </location>
</feature>
<feature type="transmembrane region" description="Helical; Name=6" evidence="2">
    <location>
        <begin position="282"/>
        <end position="299"/>
    </location>
</feature>
<feature type="repeat" description="Solcar 1">
    <location>
        <begin position="12"/>
        <end position="110"/>
    </location>
</feature>
<feature type="repeat" description="Solcar 2">
    <location>
        <begin position="119"/>
        <end position="205"/>
    </location>
</feature>
<feature type="repeat" description="Solcar 3">
    <location>
        <begin position="212"/>
        <end position="307"/>
    </location>
</feature>
<accession>A6RF73</accession>
<comment type="function">
    <text evidence="1">Mitochondrial transporter that mediates uptake of thiamine pyrophosphate (ThPP) into mitochondria.</text>
</comment>
<comment type="subcellular location">
    <subcellularLocation>
        <location evidence="1">Mitochondrion inner membrane</location>
        <topology evidence="1">Multi-pass membrane protein</topology>
    </subcellularLocation>
</comment>
<comment type="similarity">
    <text evidence="3">Belongs to the mitochondrial carrier (TC 2.A.29) family.</text>
</comment>
<name>TPC1_AJECN</name>
<keyword id="KW-0472">Membrane</keyword>
<keyword id="KW-0496">Mitochondrion</keyword>
<keyword id="KW-0999">Mitochondrion inner membrane</keyword>
<keyword id="KW-1185">Reference proteome</keyword>
<keyword id="KW-0677">Repeat</keyword>
<keyword id="KW-0812">Transmembrane</keyword>
<keyword id="KW-1133">Transmembrane helix</keyword>
<keyword id="KW-0813">Transport</keyword>
<sequence>MSAGGEHLNEEGNRIQVVAAGATAGLVSRFCVAPLDVVKIRLQLQIHSLSDPLSHRDIKGPIYKGTISTLKSIFRDEGITGLWKGNIPAELLYICYGGIQFSSYRAISSALRTLPHPLPQPVESFISGAVAGGIATTSTYPLDLLRTRFAAQGNDRIYASLRVSVRDIARTEGPHGFFRGATAAIAQIVPYMGLFFAGYEALRSPIASLELPFGTGDAGAGVVASVIAKTGVFPLDLVRKRLQVQGPTRRRYIHTNIPVYEGVYRTIRAILASQGPKGLYRGLTVSLIKAAPASAVTMWTYEHVLGLLKDMNCGDDEDDGGGGI</sequence>
<organism>
    <name type="scientific">Ajellomyces capsulatus (strain NAm1 / WU24)</name>
    <name type="common">Darling's disease fungus</name>
    <name type="synonym">Histoplasma capsulatum</name>
    <dbReference type="NCBI Taxonomy" id="2059318"/>
    <lineage>
        <taxon>Eukaryota</taxon>
        <taxon>Fungi</taxon>
        <taxon>Dikarya</taxon>
        <taxon>Ascomycota</taxon>
        <taxon>Pezizomycotina</taxon>
        <taxon>Eurotiomycetes</taxon>
        <taxon>Eurotiomycetidae</taxon>
        <taxon>Onygenales</taxon>
        <taxon>Ajellomycetaceae</taxon>
        <taxon>Histoplasma</taxon>
    </lineage>
</organism>